<accession>A9BX57</accession>
<keyword id="KW-0997">Cell inner membrane</keyword>
<keyword id="KW-1003">Cell membrane</keyword>
<keyword id="KW-0407">Ion channel</keyword>
<keyword id="KW-0406">Ion transport</keyword>
<keyword id="KW-0472">Membrane</keyword>
<keyword id="KW-1185">Reference proteome</keyword>
<keyword id="KW-0812">Transmembrane</keyword>
<keyword id="KW-1133">Transmembrane helix</keyword>
<keyword id="KW-0813">Transport</keyword>
<comment type="function">
    <text evidence="1">Channel that opens in response to stretch forces in the membrane lipid bilayer. May participate in the regulation of osmotic pressure changes within the cell.</text>
</comment>
<comment type="subunit">
    <text evidence="1">Homopentamer.</text>
</comment>
<comment type="subcellular location">
    <subcellularLocation>
        <location evidence="1">Cell inner membrane</location>
        <topology evidence="1">Multi-pass membrane protein</topology>
    </subcellularLocation>
</comment>
<comment type="similarity">
    <text evidence="1">Belongs to the MscL family.</text>
</comment>
<gene>
    <name evidence="1" type="primary">mscL</name>
    <name type="ordered locus">Daci_5504</name>
</gene>
<name>MSCL_DELAS</name>
<organism>
    <name type="scientific">Delftia acidovorans (strain DSM 14801 / SPH-1)</name>
    <dbReference type="NCBI Taxonomy" id="398578"/>
    <lineage>
        <taxon>Bacteria</taxon>
        <taxon>Pseudomonadati</taxon>
        <taxon>Pseudomonadota</taxon>
        <taxon>Betaproteobacteria</taxon>
        <taxon>Burkholderiales</taxon>
        <taxon>Comamonadaceae</taxon>
        <taxon>Delftia</taxon>
    </lineage>
</organism>
<sequence length="142" mass="15318">MGMMQEFREFAVKGNVVDLAVGVIIGGAFGKIVDSVVNDLIMPVVGLVFGKLDFSNLFVVLGSVPPGTAMTLDALKKAGVPVFAYGNFITVAVNFIILAFIIFMMVKQINRLRREAPAAPAPAPVTPEDIVLLREIRDSLKR</sequence>
<dbReference type="EMBL" id="CP000884">
    <property type="protein sequence ID" value="ABX38133.1"/>
    <property type="molecule type" value="Genomic_DNA"/>
</dbReference>
<dbReference type="RefSeq" id="WP_012207302.1">
    <property type="nucleotide sequence ID" value="NC_010002.1"/>
</dbReference>
<dbReference type="SMR" id="A9BX57"/>
<dbReference type="STRING" id="398578.Daci_5504"/>
<dbReference type="GeneID" id="94690446"/>
<dbReference type="KEGG" id="dac:Daci_5504"/>
<dbReference type="eggNOG" id="COG1970">
    <property type="taxonomic scope" value="Bacteria"/>
</dbReference>
<dbReference type="HOGENOM" id="CLU_095787_0_1_4"/>
<dbReference type="Proteomes" id="UP000000784">
    <property type="component" value="Chromosome"/>
</dbReference>
<dbReference type="GO" id="GO:0005886">
    <property type="term" value="C:plasma membrane"/>
    <property type="evidence" value="ECO:0007669"/>
    <property type="project" value="UniProtKB-SubCell"/>
</dbReference>
<dbReference type="GO" id="GO:0008381">
    <property type="term" value="F:mechanosensitive monoatomic ion channel activity"/>
    <property type="evidence" value="ECO:0007669"/>
    <property type="project" value="UniProtKB-UniRule"/>
</dbReference>
<dbReference type="Gene3D" id="1.10.1200.120">
    <property type="entry name" value="Large-conductance mechanosensitive channel, MscL, domain 1"/>
    <property type="match status" value="1"/>
</dbReference>
<dbReference type="HAMAP" id="MF_00115">
    <property type="entry name" value="MscL"/>
    <property type="match status" value="1"/>
</dbReference>
<dbReference type="InterPro" id="IPR019823">
    <property type="entry name" value="Mechanosensitive_channel_CS"/>
</dbReference>
<dbReference type="InterPro" id="IPR001185">
    <property type="entry name" value="MS_channel"/>
</dbReference>
<dbReference type="InterPro" id="IPR037673">
    <property type="entry name" value="MSC/AndL"/>
</dbReference>
<dbReference type="InterPro" id="IPR036019">
    <property type="entry name" value="MscL_channel"/>
</dbReference>
<dbReference type="NCBIfam" id="TIGR00220">
    <property type="entry name" value="mscL"/>
    <property type="match status" value="1"/>
</dbReference>
<dbReference type="NCBIfam" id="NF001843">
    <property type="entry name" value="PRK00567.1-4"/>
    <property type="match status" value="1"/>
</dbReference>
<dbReference type="NCBIfam" id="NF010557">
    <property type="entry name" value="PRK13952.1"/>
    <property type="match status" value="1"/>
</dbReference>
<dbReference type="PANTHER" id="PTHR30266:SF2">
    <property type="entry name" value="LARGE-CONDUCTANCE MECHANOSENSITIVE CHANNEL"/>
    <property type="match status" value="1"/>
</dbReference>
<dbReference type="PANTHER" id="PTHR30266">
    <property type="entry name" value="MECHANOSENSITIVE CHANNEL MSCL"/>
    <property type="match status" value="1"/>
</dbReference>
<dbReference type="Pfam" id="PF01741">
    <property type="entry name" value="MscL"/>
    <property type="match status" value="1"/>
</dbReference>
<dbReference type="PRINTS" id="PR01264">
    <property type="entry name" value="MECHCHANNEL"/>
</dbReference>
<dbReference type="SUPFAM" id="SSF81330">
    <property type="entry name" value="Gated mechanosensitive channel"/>
    <property type="match status" value="1"/>
</dbReference>
<dbReference type="PROSITE" id="PS01327">
    <property type="entry name" value="MSCL"/>
    <property type="match status" value="1"/>
</dbReference>
<evidence type="ECO:0000255" key="1">
    <source>
        <dbReference type="HAMAP-Rule" id="MF_00115"/>
    </source>
</evidence>
<feature type="chain" id="PRO_1000094890" description="Large-conductance mechanosensitive channel">
    <location>
        <begin position="1"/>
        <end position="142"/>
    </location>
</feature>
<feature type="transmembrane region" description="Helical" evidence="1">
    <location>
        <begin position="10"/>
        <end position="30"/>
    </location>
</feature>
<feature type="transmembrane region" description="Helical" evidence="1">
    <location>
        <begin position="40"/>
        <end position="60"/>
    </location>
</feature>
<feature type="transmembrane region" description="Helical" evidence="1">
    <location>
        <begin position="86"/>
        <end position="106"/>
    </location>
</feature>
<proteinExistence type="inferred from homology"/>
<protein>
    <recommendedName>
        <fullName evidence="1">Large-conductance mechanosensitive channel</fullName>
    </recommendedName>
</protein>
<reference key="1">
    <citation type="submission" date="2007-11" db="EMBL/GenBank/DDBJ databases">
        <title>Complete sequence of Delftia acidovorans DSM 14801 / SPH-1.</title>
        <authorList>
            <person name="Copeland A."/>
            <person name="Lucas S."/>
            <person name="Lapidus A."/>
            <person name="Barry K."/>
            <person name="Glavina del Rio T."/>
            <person name="Dalin E."/>
            <person name="Tice H."/>
            <person name="Pitluck S."/>
            <person name="Lowry S."/>
            <person name="Clum A."/>
            <person name="Schmutz J."/>
            <person name="Larimer F."/>
            <person name="Land M."/>
            <person name="Hauser L."/>
            <person name="Kyrpides N."/>
            <person name="Kim E."/>
            <person name="Schleheck D."/>
            <person name="Richardson P."/>
        </authorList>
    </citation>
    <scope>NUCLEOTIDE SEQUENCE [LARGE SCALE GENOMIC DNA]</scope>
    <source>
        <strain>DSM 14801 / SPH-1</strain>
    </source>
</reference>